<accession>P9WLX8</accession>
<accession>L0T9K6</accession>
<accession>P64849</accession>
<accession>P71688</accession>
<keyword id="KW-0430">Lectin</keyword>
<keyword id="KW-0472">Membrane</keyword>
<keyword id="KW-1185">Reference proteome</keyword>
<keyword id="KW-0812">Transmembrane</keyword>
<keyword id="KW-1133">Transmembrane helix</keyword>
<protein>
    <recommendedName>
        <fullName>Uncharacterized protein MT1462</fullName>
    </recommendedName>
</protein>
<organism>
    <name type="scientific">Mycobacterium tuberculosis (strain CDC 1551 / Oshkosh)</name>
    <dbReference type="NCBI Taxonomy" id="83331"/>
    <lineage>
        <taxon>Bacteria</taxon>
        <taxon>Bacillati</taxon>
        <taxon>Actinomycetota</taxon>
        <taxon>Actinomycetes</taxon>
        <taxon>Mycobacteriales</taxon>
        <taxon>Mycobacteriaceae</taxon>
        <taxon>Mycobacterium</taxon>
        <taxon>Mycobacterium tuberculosis complex</taxon>
    </lineage>
</organism>
<comment type="subcellular location">
    <subcellularLocation>
        <location evidence="3">Membrane</location>
        <topology evidence="3">Single-pass membrane protein</topology>
    </subcellularLocation>
</comment>
<gene>
    <name type="ordered locus">MT1462</name>
</gene>
<sequence length="157" mass="16853">MGELRLVGGVLRVLVVVGAVFDVAVLNAGAASADGPVQLKSRLGDVCLDAPSGSWFSPLVINPCNGTDFQRWNLTDDRQVESVAFPGECVNIGNALWARLQPCVNWISQHWTVQPDGLVKSDLDACLTVLGGPDPGTWVSTRWCDPNAPDQQWDSVP</sequence>
<feature type="chain" id="PRO_0000427401" description="Uncharacterized protein MT1462">
    <location>
        <begin position="1"/>
        <end position="157"/>
    </location>
</feature>
<feature type="transmembrane region" description="Helical" evidence="1">
    <location>
        <begin position="6"/>
        <end position="26"/>
    </location>
</feature>
<feature type="domain" description="Ricin B-type lectin" evidence="2">
    <location>
        <begin position="33"/>
        <end position="157"/>
    </location>
</feature>
<reference key="1">
    <citation type="journal article" date="2002" name="J. Bacteriol.">
        <title>Whole-genome comparison of Mycobacterium tuberculosis clinical and laboratory strains.</title>
        <authorList>
            <person name="Fleischmann R.D."/>
            <person name="Alland D."/>
            <person name="Eisen J.A."/>
            <person name="Carpenter L."/>
            <person name="White O."/>
            <person name="Peterson J.D."/>
            <person name="DeBoy R.T."/>
            <person name="Dodson R.J."/>
            <person name="Gwinn M.L."/>
            <person name="Haft D.H."/>
            <person name="Hickey E.K."/>
            <person name="Kolonay J.F."/>
            <person name="Nelson W.C."/>
            <person name="Umayam L.A."/>
            <person name="Ermolaeva M.D."/>
            <person name="Salzberg S.L."/>
            <person name="Delcher A."/>
            <person name="Utterback T.R."/>
            <person name="Weidman J.F."/>
            <person name="Khouri H.M."/>
            <person name="Gill J."/>
            <person name="Mikula A."/>
            <person name="Bishai W."/>
            <person name="Jacobs W.R. Jr."/>
            <person name="Venter J.C."/>
            <person name="Fraser C.M."/>
        </authorList>
    </citation>
    <scope>NUCLEOTIDE SEQUENCE [LARGE SCALE GENOMIC DNA]</scope>
    <source>
        <strain>CDC 1551 / Oshkosh</strain>
    </source>
</reference>
<dbReference type="EMBL" id="AE000516">
    <property type="protein sequence ID" value="AAK45727.1"/>
    <property type="molecule type" value="Genomic_DNA"/>
</dbReference>
<dbReference type="PIR" id="H70902">
    <property type="entry name" value="H70902"/>
</dbReference>
<dbReference type="RefSeq" id="WP_003407345.1">
    <property type="nucleotide sequence ID" value="NZ_KK341227.1"/>
</dbReference>
<dbReference type="SMR" id="P9WLX8"/>
<dbReference type="CAZy" id="CBM13">
    <property type="family name" value="Carbohydrate-Binding Module Family 13"/>
</dbReference>
<dbReference type="KEGG" id="mtc:MT1462"/>
<dbReference type="PATRIC" id="fig|83331.31.peg.1571"/>
<dbReference type="HOGENOM" id="CLU_126519_0_0_11"/>
<dbReference type="Proteomes" id="UP000001020">
    <property type="component" value="Chromosome"/>
</dbReference>
<dbReference type="GO" id="GO:0016020">
    <property type="term" value="C:membrane"/>
    <property type="evidence" value="ECO:0007669"/>
    <property type="project" value="UniProtKB-SubCell"/>
</dbReference>
<dbReference type="GO" id="GO:0030246">
    <property type="term" value="F:carbohydrate binding"/>
    <property type="evidence" value="ECO:0007669"/>
    <property type="project" value="UniProtKB-KW"/>
</dbReference>
<dbReference type="CDD" id="cd00161">
    <property type="entry name" value="beta-trefoil_Ricin-like"/>
    <property type="match status" value="1"/>
</dbReference>
<dbReference type="Gene3D" id="2.80.10.50">
    <property type="match status" value="2"/>
</dbReference>
<dbReference type="InterPro" id="IPR035992">
    <property type="entry name" value="Ricin_B-like_lectins"/>
</dbReference>
<dbReference type="InterPro" id="IPR000772">
    <property type="entry name" value="Ricin_B_lectin"/>
</dbReference>
<dbReference type="Pfam" id="PF00652">
    <property type="entry name" value="Ricin_B_lectin"/>
    <property type="match status" value="1"/>
</dbReference>
<dbReference type="SMART" id="SM00458">
    <property type="entry name" value="RICIN"/>
    <property type="match status" value="1"/>
</dbReference>
<dbReference type="SUPFAM" id="SSF50370">
    <property type="entry name" value="Ricin B-like lectins"/>
    <property type="match status" value="1"/>
</dbReference>
<dbReference type="PROSITE" id="PS50231">
    <property type="entry name" value="RICIN_B_LECTIN"/>
    <property type="match status" value="1"/>
</dbReference>
<proteinExistence type="predicted"/>
<evidence type="ECO:0000255" key="1"/>
<evidence type="ECO:0000255" key="2">
    <source>
        <dbReference type="PROSITE-ProRule" id="PRU00174"/>
    </source>
</evidence>
<evidence type="ECO:0000305" key="3"/>
<name>Y1419_MYCTO</name>